<comment type="function">
    <text evidence="1">Bifunctional enzyme with both catalase and broad-spectrum peroxidase activity.</text>
</comment>
<comment type="catalytic activity">
    <reaction evidence="1">
        <text>H2O2 + AH2 = A + 2 H2O</text>
        <dbReference type="Rhea" id="RHEA:30275"/>
        <dbReference type="ChEBI" id="CHEBI:13193"/>
        <dbReference type="ChEBI" id="CHEBI:15377"/>
        <dbReference type="ChEBI" id="CHEBI:16240"/>
        <dbReference type="ChEBI" id="CHEBI:17499"/>
        <dbReference type="EC" id="1.11.1.21"/>
    </reaction>
</comment>
<comment type="catalytic activity">
    <reaction evidence="1">
        <text>2 H2O2 = O2 + 2 H2O</text>
        <dbReference type="Rhea" id="RHEA:20309"/>
        <dbReference type="ChEBI" id="CHEBI:15377"/>
        <dbReference type="ChEBI" id="CHEBI:15379"/>
        <dbReference type="ChEBI" id="CHEBI:16240"/>
        <dbReference type="EC" id="1.11.1.21"/>
    </reaction>
</comment>
<comment type="cofactor">
    <cofactor evidence="1">
        <name>heme b</name>
        <dbReference type="ChEBI" id="CHEBI:60344"/>
    </cofactor>
    <text evidence="1">Binds 1 heme b (iron(II)-protoporphyrin IX) group per dimer.</text>
</comment>
<comment type="subunit">
    <text evidence="1">Homodimer or homotetramer.</text>
</comment>
<comment type="PTM">
    <text evidence="1">Formation of the three residue Trp-Tyr-Met cross-link is important for the catalase, but not the peroxidase activity of the enzyme.</text>
</comment>
<comment type="similarity">
    <text evidence="1">Belongs to the peroxidase family. Peroxidase/catalase subfamily.</text>
</comment>
<proteinExistence type="inferred from homology"/>
<name>KATG_ACICJ</name>
<reference key="1">
    <citation type="submission" date="2007-05" db="EMBL/GenBank/DDBJ databases">
        <title>Complete sequence of chromosome of Acidiphilium cryptum JF-5.</title>
        <authorList>
            <consortium name="US DOE Joint Genome Institute"/>
            <person name="Copeland A."/>
            <person name="Lucas S."/>
            <person name="Lapidus A."/>
            <person name="Barry K."/>
            <person name="Detter J.C."/>
            <person name="Glavina del Rio T."/>
            <person name="Hammon N."/>
            <person name="Israni S."/>
            <person name="Dalin E."/>
            <person name="Tice H."/>
            <person name="Pitluck S."/>
            <person name="Sims D."/>
            <person name="Brettin T."/>
            <person name="Bruce D."/>
            <person name="Han C."/>
            <person name="Schmutz J."/>
            <person name="Larimer F."/>
            <person name="Land M."/>
            <person name="Hauser L."/>
            <person name="Kyrpides N."/>
            <person name="Kim E."/>
            <person name="Magnuson T."/>
            <person name="Richardson P."/>
        </authorList>
    </citation>
    <scope>NUCLEOTIDE SEQUENCE [LARGE SCALE GENOMIC DNA]</scope>
    <source>
        <strain>JF-5</strain>
    </source>
</reference>
<keyword id="KW-0349">Heme</keyword>
<keyword id="KW-0376">Hydrogen peroxide</keyword>
<keyword id="KW-0408">Iron</keyword>
<keyword id="KW-0479">Metal-binding</keyword>
<keyword id="KW-0560">Oxidoreductase</keyword>
<keyword id="KW-0575">Peroxidase</keyword>
<keyword id="KW-1185">Reference proteome</keyword>
<keyword id="KW-0732">Signal</keyword>
<organism>
    <name type="scientific">Acidiphilium cryptum (strain JF-5)</name>
    <dbReference type="NCBI Taxonomy" id="349163"/>
    <lineage>
        <taxon>Bacteria</taxon>
        <taxon>Pseudomonadati</taxon>
        <taxon>Pseudomonadota</taxon>
        <taxon>Alphaproteobacteria</taxon>
        <taxon>Acetobacterales</taxon>
        <taxon>Acidocellaceae</taxon>
        <taxon>Acidiphilium</taxon>
    </lineage>
</organism>
<feature type="signal peptide" evidence="1">
    <location>
        <begin position="1"/>
        <end position="19"/>
    </location>
</feature>
<feature type="chain" id="PRO_0000354708" description="Catalase-peroxidase">
    <location>
        <begin position="20"/>
        <end position="728"/>
    </location>
</feature>
<feature type="region of interest" description="Disordered" evidence="2">
    <location>
        <begin position="1"/>
        <end position="20"/>
    </location>
</feature>
<feature type="active site" description="Proton acceptor" evidence="1">
    <location>
        <position position="97"/>
    </location>
</feature>
<feature type="binding site" description="axial binding residue" evidence="1">
    <location>
        <position position="260"/>
    </location>
    <ligand>
        <name>heme b</name>
        <dbReference type="ChEBI" id="CHEBI:60344"/>
    </ligand>
    <ligandPart>
        <name>Fe</name>
        <dbReference type="ChEBI" id="CHEBI:18248"/>
    </ligandPart>
</feature>
<feature type="site" description="Transition state stabilizer" evidence="1">
    <location>
        <position position="93"/>
    </location>
</feature>
<feature type="cross-link" description="Tryptophyl-tyrosyl-methioninium (Trp-Tyr) (with M-245)" evidence="1">
    <location>
        <begin position="96"/>
        <end position="219"/>
    </location>
</feature>
<feature type="cross-link" description="Tryptophyl-tyrosyl-methioninium (Tyr-Met) (with W-96)" evidence="1">
    <location>
        <begin position="219"/>
        <end position="245"/>
    </location>
</feature>
<accession>A5FZM1</accession>
<sequence>MSTEAKCPVTGGATRSSSAGIQSNADWWPNQINLGMLHQHSALSNPMDPDFDYAAEFKTLDLDAVIADLKALMTDSQDWWPADFGHYGPLFVRMAWHAAGTYRIGDGRGGAGAGQQRFAPLNSWPDNANLDKARRLLWPVKQKYGRKISWADLMVLAGNVALESMGFKTFGFGAGRVDTWEPDQGIYWGPETTWLDDKRYSGDRDLENPLAAVQMGLIYVNPEGPNGKPDPVAAARDIRETFARMAMNDEETVALIAGGHTFGKTHGAGDAALVGPEPEAAPIEQQGLGWISSYGTGKGSDAITGGPEVTWTQTPTQWSNFYFDNLFNYEWELTKSPAGAWQWVAKDAGDVIPDAFDAAKKHRPTMLTTDLSMRMDPAYEKISRRFHQNPDEFADAFARAWFKLTHRDMGPVSRYLGKLVPAEHLIWQDPVPAVDHKLIDAADIAALKAKLLATGIAPTRLALTAWASAATFRGSDKRGGANGARIRLAPQKDWAANEPAELAKVLAALEKVQAEFNAAATGGKKVSLADLIVLGGCAAIEAAAKAAGHDVTVPFTPGRTDATEAQTDVASFAVLEPKADGFRNYLGKGDPRAPEEQLIDRAQLMTLTAPEMTALIGGMRALGANVGGAKHGVFTTRPGALTNDFFVNLLDMNMSWHPAAEPGVYELRDRKSGAVKWTATRVDLVFGSNSQLRALAEVYGTQDGEAAFVKDFVAAWTKVMELDRFDLA</sequence>
<evidence type="ECO:0000255" key="1">
    <source>
        <dbReference type="HAMAP-Rule" id="MF_01961"/>
    </source>
</evidence>
<evidence type="ECO:0000256" key="2">
    <source>
        <dbReference type="SAM" id="MobiDB-lite"/>
    </source>
</evidence>
<gene>
    <name evidence="1" type="primary">katG</name>
    <name type="ordered locus">Acry_1851</name>
</gene>
<protein>
    <recommendedName>
        <fullName evidence="1">Catalase-peroxidase</fullName>
        <shortName evidence="1">CP</shortName>
        <ecNumber evidence="1">1.11.1.21</ecNumber>
    </recommendedName>
    <alternativeName>
        <fullName evidence="1">Peroxidase/catalase</fullName>
    </alternativeName>
</protein>
<dbReference type="EC" id="1.11.1.21" evidence="1"/>
<dbReference type="EMBL" id="CP000697">
    <property type="protein sequence ID" value="ABQ31053.1"/>
    <property type="molecule type" value="Genomic_DNA"/>
</dbReference>
<dbReference type="RefSeq" id="WP_007423989.1">
    <property type="nucleotide sequence ID" value="NC_009484.1"/>
</dbReference>
<dbReference type="SMR" id="A5FZM1"/>
<dbReference type="STRING" id="349163.Acry_1851"/>
<dbReference type="PeroxiBase" id="3597">
    <property type="entry name" value="AcrCP01_JF-5"/>
</dbReference>
<dbReference type="KEGG" id="acr:Acry_1851"/>
<dbReference type="eggNOG" id="COG0376">
    <property type="taxonomic scope" value="Bacteria"/>
</dbReference>
<dbReference type="HOGENOM" id="CLU_025424_2_0_5"/>
<dbReference type="Proteomes" id="UP000000245">
    <property type="component" value="Chromosome"/>
</dbReference>
<dbReference type="GO" id="GO:0005829">
    <property type="term" value="C:cytosol"/>
    <property type="evidence" value="ECO:0007669"/>
    <property type="project" value="TreeGrafter"/>
</dbReference>
<dbReference type="GO" id="GO:0004096">
    <property type="term" value="F:catalase activity"/>
    <property type="evidence" value="ECO:0007669"/>
    <property type="project" value="UniProtKB-UniRule"/>
</dbReference>
<dbReference type="GO" id="GO:0020037">
    <property type="term" value="F:heme binding"/>
    <property type="evidence" value="ECO:0007669"/>
    <property type="project" value="InterPro"/>
</dbReference>
<dbReference type="GO" id="GO:0046872">
    <property type="term" value="F:metal ion binding"/>
    <property type="evidence" value="ECO:0007669"/>
    <property type="project" value="UniProtKB-KW"/>
</dbReference>
<dbReference type="GO" id="GO:0070301">
    <property type="term" value="P:cellular response to hydrogen peroxide"/>
    <property type="evidence" value="ECO:0007669"/>
    <property type="project" value="TreeGrafter"/>
</dbReference>
<dbReference type="GO" id="GO:0042744">
    <property type="term" value="P:hydrogen peroxide catabolic process"/>
    <property type="evidence" value="ECO:0007669"/>
    <property type="project" value="UniProtKB-KW"/>
</dbReference>
<dbReference type="CDD" id="cd00649">
    <property type="entry name" value="catalase_peroxidase_1"/>
    <property type="match status" value="1"/>
</dbReference>
<dbReference type="CDD" id="cd08200">
    <property type="entry name" value="catalase_peroxidase_2"/>
    <property type="match status" value="1"/>
</dbReference>
<dbReference type="FunFam" id="1.10.420.10:FF:000002">
    <property type="entry name" value="Catalase-peroxidase"/>
    <property type="match status" value="1"/>
</dbReference>
<dbReference type="FunFam" id="1.10.420.10:FF:000004">
    <property type="entry name" value="Catalase-peroxidase"/>
    <property type="match status" value="1"/>
</dbReference>
<dbReference type="FunFam" id="1.10.520.10:FF:000002">
    <property type="entry name" value="Catalase-peroxidase"/>
    <property type="match status" value="1"/>
</dbReference>
<dbReference type="Gene3D" id="1.10.520.10">
    <property type="match status" value="2"/>
</dbReference>
<dbReference type="Gene3D" id="1.10.420.10">
    <property type="entry name" value="Peroxidase, domain 2"/>
    <property type="match status" value="2"/>
</dbReference>
<dbReference type="HAMAP" id="MF_01961">
    <property type="entry name" value="Catal_peroxid"/>
    <property type="match status" value="1"/>
</dbReference>
<dbReference type="InterPro" id="IPR000763">
    <property type="entry name" value="Catalase_peroxidase"/>
</dbReference>
<dbReference type="InterPro" id="IPR002016">
    <property type="entry name" value="Haem_peroxidase"/>
</dbReference>
<dbReference type="InterPro" id="IPR010255">
    <property type="entry name" value="Haem_peroxidase_sf"/>
</dbReference>
<dbReference type="InterPro" id="IPR019794">
    <property type="entry name" value="Peroxidases_AS"/>
</dbReference>
<dbReference type="InterPro" id="IPR019793">
    <property type="entry name" value="Peroxidases_heam-ligand_BS"/>
</dbReference>
<dbReference type="NCBIfam" id="TIGR00198">
    <property type="entry name" value="cat_per_HPI"/>
    <property type="match status" value="1"/>
</dbReference>
<dbReference type="NCBIfam" id="NF011635">
    <property type="entry name" value="PRK15061.1"/>
    <property type="match status" value="1"/>
</dbReference>
<dbReference type="PANTHER" id="PTHR30555:SF0">
    <property type="entry name" value="CATALASE-PEROXIDASE"/>
    <property type="match status" value="1"/>
</dbReference>
<dbReference type="PANTHER" id="PTHR30555">
    <property type="entry name" value="HYDROPEROXIDASE I, BIFUNCTIONAL CATALASE-PEROXIDASE"/>
    <property type="match status" value="1"/>
</dbReference>
<dbReference type="Pfam" id="PF00141">
    <property type="entry name" value="peroxidase"/>
    <property type="match status" value="2"/>
</dbReference>
<dbReference type="PRINTS" id="PR00460">
    <property type="entry name" value="BPEROXIDASE"/>
</dbReference>
<dbReference type="PRINTS" id="PR00458">
    <property type="entry name" value="PEROXIDASE"/>
</dbReference>
<dbReference type="SUPFAM" id="SSF48113">
    <property type="entry name" value="Heme-dependent peroxidases"/>
    <property type="match status" value="2"/>
</dbReference>
<dbReference type="PROSITE" id="PS00435">
    <property type="entry name" value="PEROXIDASE_1"/>
    <property type="match status" value="1"/>
</dbReference>
<dbReference type="PROSITE" id="PS00436">
    <property type="entry name" value="PEROXIDASE_2"/>
    <property type="match status" value="1"/>
</dbReference>
<dbReference type="PROSITE" id="PS50873">
    <property type="entry name" value="PEROXIDASE_4"/>
    <property type="match status" value="2"/>
</dbReference>